<protein>
    <recommendedName>
        <fullName evidence="2">Small ribosomal subunit protein uS2</fullName>
    </recommendedName>
    <alternativeName>
        <fullName>30S ribosomal protein S2</fullName>
    </alternativeName>
</protein>
<feature type="initiator methionine" description="Removed" evidence="1">
    <location>
        <position position="1"/>
    </location>
</feature>
<feature type="chain" id="PRO_0000134176" description="Small ribosomal subunit protein uS2">
    <location>
        <begin position="2"/>
        <end position="240"/>
    </location>
</feature>
<accession>P44371</accession>
<comment type="similarity">
    <text evidence="2">Belongs to the universal ribosomal protein uS2 family.</text>
</comment>
<comment type="sequence caution" evidence="2">
    <conflict type="erroneous initiation">
        <sequence resource="EMBL-CDS" id="AAC22571"/>
    </conflict>
</comment>
<name>RS2_HAEIN</name>
<dbReference type="EMBL" id="L42023">
    <property type="protein sequence ID" value="AAC22571.1"/>
    <property type="status" value="ALT_INIT"/>
    <property type="molecule type" value="Genomic_DNA"/>
</dbReference>
<dbReference type="PIR" id="B64102">
    <property type="entry name" value="B64102"/>
</dbReference>
<dbReference type="RefSeq" id="NP_439073.2">
    <property type="nucleotide sequence ID" value="NC_000907.1"/>
</dbReference>
<dbReference type="SMR" id="P44371"/>
<dbReference type="STRING" id="71421.HI_0913"/>
<dbReference type="EnsemblBacteria" id="AAC22571">
    <property type="protein sequence ID" value="AAC22571"/>
    <property type="gene ID" value="HI_0913"/>
</dbReference>
<dbReference type="KEGG" id="hin:HI_0913"/>
<dbReference type="PATRIC" id="fig|71421.8.peg.954"/>
<dbReference type="eggNOG" id="COG0052">
    <property type="taxonomic scope" value="Bacteria"/>
</dbReference>
<dbReference type="HOGENOM" id="CLU_040318_1_0_6"/>
<dbReference type="OrthoDB" id="9808036at2"/>
<dbReference type="PhylomeDB" id="P44371"/>
<dbReference type="BioCyc" id="HINF71421:G1GJ1-952-MONOMER"/>
<dbReference type="Proteomes" id="UP000000579">
    <property type="component" value="Chromosome"/>
</dbReference>
<dbReference type="GO" id="GO:0022627">
    <property type="term" value="C:cytosolic small ribosomal subunit"/>
    <property type="evidence" value="ECO:0000318"/>
    <property type="project" value="GO_Central"/>
</dbReference>
<dbReference type="GO" id="GO:0003735">
    <property type="term" value="F:structural constituent of ribosome"/>
    <property type="evidence" value="ECO:0000318"/>
    <property type="project" value="GO_Central"/>
</dbReference>
<dbReference type="GO" id="GO:0006412">
    <property type="term" value="P:translation"/>
    <property type="evidence" value="ECO:0007669"/>
    <property type="project" value="UniProtKB-UniRule"/>
</dbReference>
<dbReference type="CDD" id="cd01425">
    <property type="entry name" value="RPS2"/>
    <property type="match status" value="1"/>
</dbReference>
<dbReference type="FunFam" id="1.10.287.610:FF:000001">
    <property type="entry name" value="30S ribosomal protein S2"/>
    <property type="match status" value="1"/>
</dbReference>
<dbReference type="Gene3D" id="3.40.50.10490">
    <property type="entry name" value="Glucose-6-phosphate isomerase like protein, domain 1"/>
    <property type="match status" value="1"/>
</dbReference>
<dbReference type="Gene3D" id="1.10.287.610">
    <property type="entry name" value="Helix hairpin bin"/>
    <property type="match status" value="1"/>
</dbReference>
<dbReference type="HAMAP" id="MF_00291_B">
    <property type="entry name" value="Ribosomal_uS2_B"/>
    <property type="match status" value="1"/>
</dbReference>
<dbReference type="InterPro" id="IPR001865">
    <property type="entry name" value="Ribosomal_uS2"/>
</dbReference>
<dbReference type="InterPro" id="IPR005706">
    <property type="entry name" value="Ribosomal_uS2_bac/mit/plastid"/>
</dbReference>
<dbReference type="InterPro" id="IPR018130">
    <property type="entry name" value="Ribosomal_uS2_CS"/>
</dbReference>
<dbReference type="InterPro" id="IPR023591">
    <property type="entry name" value="Ribosomal_uS2_flav_dom_sf"/>
</dbReference>
<dbReference type="NCBIfam" id="TIGR01011">
    <property type="entry name" value="rpsB_bact"/>
    <property type="match status" value="1"/>
</dbReference>
<dbReference type="PANTHER" id="PTHR12534">
    <property type="entry name" value="30S RIBOSOMAL PROTEIN S2 PROKARYOTIC AND ORGANELLAR"/>
    <property type="match status" value="1"/>
</dbReference>
<dbReference type="PANTHER" id="PTHR12534:SF0">
    <property type="entry name" value="SMALL RIBOSOMAL SUBUNIT PROTEIN US2M"/>
    <property type="match status" value="1"/>
</dbReference>
<dbReference type="Pfam" id="PF00318">
    <property type="entry name" value="Ribosomal_S2"/>
    <property type="match status" value="1"/>
</dbReference>
<dbReference type="PRINTS" id="PR00395">
    <property type="entry name" value="RIBOSOMALS2"/>
</dbReference>
<dbReference type="SUPFAM" id="SSF52313">
    <property type="entry name" value="Ribosomal protein S2"/>
    <property type="match status" value="1"/>
</dbReference>
<dbReference type="PROSITE" id="PS00962">
    <property type="entry name" value="RIBOSOMAL_S2_1"/>
    <property type="match status" value="1"/>
</dbReference>
<dbReference type="PROSITE" id="PS00963">
    <property type="entry name" value="RIBOSOMAL_S2_2"/>
    <property type="match status" value="1"/>
</dbReference>
<evidence type="ECO:0000269" key="1">
    <source>
    </source>
</evidence>
<evidence type="ECO:0000305" key="2"/>
<keyword id="KW-0903">Direct protein sequencing</keyword>
<keyword id="KW-1185">Reference proteome</keyword>
<keyword id="KW-0687">Ribonucleoprotein</keyword>
<keyword id="KW-0689">Ribosomal protein</keyword>
<reference key="1">
    <citation type="journal article" date="1995" name="Science">
        <title>Whole-genome random sequencing and assembly of Haemophilus influenzae Rd.</title>
        <authorList>
            <person name="Fleischmann R.D."/>
            <person name="Adams M.D."/>
            <person name="White O."/>
            <person name="Clayton R.A."/>
            <person name="Kirkness E.F."/>
            <person name="Kerlavage A.R."/>
            <person name="Bult C.J."/>
            <person name="Tomb J.-F."/>
            <person name="Dougherty B.A."/>
            <person name="Merrick J.M."/>
            <person name="McKenney K."/>
            <person name="Sutton G.G."/>
            <person name="FitzHugh W."/>
            <person name="Fields C.A."/>
            <person name="Gocayne J.D."/>
            <person name="Scott J.D."/>
            <person name="Shirley R."/>
            <person name="Liu L.-I."/>
            <person name="Glodek A."/>
            <person name="Kelley J.M."/>
            <person name="Weidman J.F."/>
            <person name="Phillips C.A."/>
            <person name="Spriggs T."/>
            <person name="Hedblom E."/>
            <person name="Cotton M.D."/>
            <person name="Utterback T.R."/>
            <person name="Hanna M.C."/>
            <person name="Nguyen D.T."/>
            <person name="Saudek D.M."/>
            <person name="Brandon R.C."/>
            <person name="Fine L.D."/>
            <person name="Fritchman J.L."/>
            <person name="Fuhrmann J.L."/>
            <person name="Geoghagen N.S.M."/>
            <person name="Gnehm C.L."/>
            <person name="McDonald L.A."/>
            <person name="Small K.V."/>
            <person name="Fraser C.M."/>
            <person name="Smith H.O."/>
            <person name="Venter J.C."/>
        </authorList>
    </citation>
    <scope>NUCLEOTIDE SEQUENCE [LARGE SCALE GENOMIC DNA]</scope>
    <source>
        <strain>ATCC 51907 / DSM 11121 / KW20 / Rd</strain>
    </source>
</reference>
<reference key="2">
    <citation type="journal article" date="2000" name="Electrophoresis">
        <title>Two-dimensional map of the proteome of Haemophilus influenzae.</title>
        <authorList>
            <person name="Langen H."/>
            <person name="Takacs B."/>
            <person name="Evers S."/>
            <person name="Berndt P."/>
            <person name="Lahm H.W."/>
            <person name="Wipf B."/>
            <person name="Gray C."/>
            <person name="Fountoulakis M."/>
        </authorList>
    </citation>
    <scope>PROTEIN SEQUENCE OF 2-8</scope>
    <source>
        <strain>ATCC 51907 / DSM 11121 / KW20 / Rd</strain>
    </source>
</reference>
<proteinExistence type="evidence at protein level"/>
<gene>
    <name type="primary">rpsB</name>
    <name type="synonym">rps2</name>
    <name type="ordered locus">HI_0913</name>
</gene>
<organism>
    <name type="scientific">Haemophilus influenzae (strain ATCC 51907 / DSM 11121 / KW20 / Rd)</name>
    <dbReference type="NCBI Taxonomy" id="71421"/>
    <lineage>
        <taxon>Bacteria</taxon>
        <taxon>Pseudomonadati</taxon>
        <taxon>Pseudomonadota</taxon>
        <taxon>Gammaproteobacteria</taxon>
        <taxon>Pasteurellales</taxon>
        <taxon>Pasteurellaceae</taxon>
        <taxon>Haemophilus</taxon>
    </lineage>
</organism>
<sequence length="240" mass="26264">MAQVSMRDMINAGVHFGHQTRYWNPQMKPFIFGARNGVHIINLEKTLPLFNEALAELTRIASNNGKVLFVGTKRAASEAVQAAALDCQQYYVNHRWLGGMLTNWKTVRQSIKRLKDLETQSQDGTFDKLTKKEALMRSREMEKLELSLGGIKDMGGLPDALFVIGADHEHIAVKEANNLGIPVFAIVDTNSTPAGVDFVIPGNDDATRAIQLYVSAAAAAVKEGRGNEAQVAEELAADAE</sequence>